<organism>
    <name type="scientific">Salmonella enteritidis PT4 (strain P125109)</name>
    <dbReference type="NCBI Taxonomy" id="550537"/>
    <lineage>
        <taxon>Bacteria</taxon>
        <taxon>Pseudomonadati</taxon>
        <taxon>Pseudomonadota</taxon>
        <taxon>Gammaproteobacteria</taxon>
        <taxon>Enterobacterales</taxon>
        <taxon>Enterobacteriaceae</taxon>
        <taxon>Salmonella</taxon>
    </lineage>
</organism>
<dbReference type="EC" id="2.8.4.3" evidence="1"/>
<dbReference type="EMBL" id="AM933172">
    <property type="protein sequence ID" value="CAR32227.1"/>
    <property type="molecule type" value="Genomic_DNA"/>
</dbReference>
<dbReference type="RefSeq" id="WP_001575805.1">
    <property type="nucleotide sequence ID" value="NC_011294.1"/>
</dbReference>
<dbReference type="SMR" id="B5QWC1"/>
<dbReference type="KEGG" id="set:SEN0639"/>
<dbReference type="HOGENOM" id="CLU_018697_2_0_6"/>
<dbReference type="Proteomes" id="UP000000613">
    <property type="component" value="Chromosome"/>
</dbReference>
<dbReference type="GO" id="GO:0005829">
    <property type="term" value="C:cytosol"/>
    <property type="evidence" value="ECO:0007669"/>
    <property type="project" value="TreeGrafter"/>
</dbReference>
<dbReference type="GO" id="GO:0051539">
    <property type="term" value="F:4 iron, 4 sulfur cluster binding"/>
    <property type="evidence" value="ECO:0007669"/>
    <property type="project" value="UniProtKB-UniRule"/>
</dbReference>
<dbReference type="GO" id="GO:0046872">
    <property type="term" value="F:metal ion binding"/>
    <property type="evidence" value="ECO:0007669"/>
    <property type="project" value="UniProtKB-KW"/>
</dbReference>
<dbReference type="GO" id="GO:0035597">
    <property type="term" value="F:N6-isopentenyladenosine methylthiotransferase activity"/>
    <property type="evidence" value="ECO:0007669"/>
    <property type="project" value="TreeGrafter"/>
</dbReference>
<dbReference type="CDD" id="cd01335">
    <property type="entry name" value="Radical_SAM"/>
    <property type="match status" value="1"/>
</dbReference>
<dbReference type="FunFam" id="3.40.50.12160:FF:000001">
    <property type="entry name" value="tRNA-2-methylthio-N(6)-dimethylallyladenosine synthase"/>
    <property type="match status" value="1"/>
</dbReference>
<dbReference type="FunFam" id="3.80.30.20:FF:000001">
    <property type="entry name" value="tRNA-2-methylthio-N(6)-dimethylallyladenosine synthase 2"/>
    <property type="match status" value="1"/>
</dbReference>
<dbReference type="Gene3D" id="3.40.50.12160">
    <property type="entry name" value="Methylthiotransferase, N-terminal domain"/>
    <property type="match status" value="1"/>
</dbReference>
<dbReference type="Gene3D" id="3.80.30.20">
    <property type="entry name" value="tm_1862 like domain"/>
    <property type="match status" value="1"/>
</dbReference>
<dbReference type="HAMAP" id="MF_01864">
    <property type="entry name" value="tRNA_metthiotr_MiaB"/>
    <property type="match status" value="1"/>
</dbReference>
<dbReference type="InterPro" id="IPR006638">
    <property type="entry name" value="Elp3/MiaA/NifB-like_rSAM"/>
</dbReference>
<dbReference type="InterPro" id="IPR005839">
    <property type="entry name" value="Methylthiotransferase"/>
</dbReference>
<dbReference type="InterPro" id="IPR020612">
    <property type="entry name" value="Methylthiotransferase_CS"/>
</dbReference>
<dbReference type="InterPro" id="IPR013848">
    <property type="entry name" value="Methylthiotransferase_N"/>
</dbReference>
<dbReference type="InterPro" id="IPR038135">
    <property type="entry name" value="Methylthiotransferase_N_sf"/>
</dbReference>
<dbReference type="InterPro" id="IPR006463">
    <property type="entry name" value="MiaB_methiolase"/>
</dbReference>
<dbReference type="InterPro" id="IPR007197">
    <property type="entry name" value="rSAM"/>
</dbReference>
<dbReference type="InterPro" id="IPR023404">
    <property type="entry name" value="rSAM_horseshoe"/>
</dbReference>
<dbReference type="InterPro" id="IPR002792">
    <property type="entry name" value="TRAM_dom"/>
</dbReference>
<dbReference type="NCBIfam" id="TIGR01574">
    <property type="entry name" value="miaB-methiolase"/>
    <property type="match status" value="1"/>
</dbReference>
<dbReference type="NCBIfam" id="TIGR00089">
    <property type="entry name" value="MiaB/RimO family radical SAM methylthiotransferase"/>
    <property type="match status" value="1"/>
</dbReference>
<dbReference type="PANTHER" id="PTHR43020">
    <property type="entry name" value="CDK5 REGULATORY SUBUNIT-ASSOCIATED PROTEIN 1"/>
    <property type="match status" value="1"/>
</dbReference>
<dbReference type="PANTHER" id="PTHR43020:SF2">
    <property type="entry name" value="MITOCHONDRIAL TRNA METHYLTHIOTRANSFERASE CDK5RAP1"/>
    <property type="match status" value="1"/>
</dbReference>
<dbReference type="Pfam" id="PF04055">
    <property type="entry name" value="Radical_SAM"/>
    <property type="match status" value="1"/>
</dbReference>
<dbReference type="Pfam" id="PF01938">
    <property type="entry name" value="TRAM"/>
    <property type="match status" value="1"/>
</dbReference>
<dbReference type="Pfam" id="PF00919">
    <property type="entry name" value="UPF0004"/>
    <property type="match status" value="1"/>
</dbReference>
<dbReference type="SFLD" id="SFLDF00273">
    <property type="entry name" value="(dimethylallyl)adenosine_tRNA"/>
    <property type="match status" value="1"/>
</dbReference>
<dbReference type="SFLD" id="SFLDG01082">
    <property type="entry name" value="B12-binding_domain_containing"/>
    <property type="match status" value="1"/>
</dbReference>
<dbReference type="SFLD" id="SFLDS00029">
    <property type="entry name" value="Radical_SAM"/>
    <property type="match status" value="1"/>
</dbReference>
<dbReference type="SMART" id="SM00729">
    <property type="entry name" value="Elp3"/>
    <property type="match status" value="1"/>
</dbReference>
<dbReference type="SUPFAM" id="SSF102114">
    <property type="entry name" value="Radical SAM enzymes"/>
    <property type="match status" value="1"/>
</dbReference>
<dbReference type="PROSITE" id="PS51449">
    <property type="entry name" value="MTTASE_N"/>
    <property type="match status" value="1"/>
</dbReference>
<dbReference type="PROSITE" id="PS01278">
    <property type="entry name" value="MTTASE_RADICAL"/>
    <property type="match status" value="1"/>
</dbReference>
<dbReference type="PROSITE" id="PS51918">
    <property type="entry name" value="RADICAL_SAM"/>
    <property type="match status" value="1"/>
</dbReference>
<dbReference type="PROSITE" id="PS50926">
    <property type="entry name" value="TRAM"/>
    <property type="match status" value="1"/>
</dbReference>
<reference key="1">
    <citation type="journal article" date="2008" name="Genome Res.">
        <title>Comparative genome analysis of Salmonella enteritidis PT4 and Salmonella gallinarum 287/91 provides insights into evolutionary and host adaptation pathways.</title>
        <authorList>
            <person name="Thomson N.R."/>
            <person name="Clayton D.J."/>
            <person name="Windhorst D."/>
            <person name="Vernikos G."/>
            <person name="Davidson S."/>
            <person name="Churcher C."/>
            <person name="Quail M.A."/>
            <person name="Stevens M."/>
            <person name="Jones M.A."/>
            <person name="Watson M."/>
            <person name="Barron A."/>
            <person name="Layton A."/>
            <person name="Pickard D."/>
            <person name="Kingsley R.A."/>
            <person name="Bignell A."/>
            <person name="Clark L."/>
            <person name="Harris B."/>
            <person name="Ormond D."/>
            <person name="Abdellah Z."/>
            <person name="Brooks K."/>
            <person name="Cherevach I."/>
            <person name="Chillingworth T."/>
            <person name="Woodward J."/>
            <person name="Norberczak H."/>
            <person name="Lord A."/>
            <person name="Arrowsmith C."/>
            <person name="Jagels K."/>
            <person name="Moule S."/>
            <person name="Mungall K."/>
            <person name="Saunders M."/>
            <person name="Whitehead S."/>
            <person name="Chabalgoity J.A."/>
            <person name="Maskell D."/>
            <person name="Humphreys T."/>
            <person name="Roberts M."/>
            <person name="Barrow P.A."/>
            <person name="Dougan G."/>
            <person name="Parkhill J."/>
        </authorList>
    </citation>
    <scope>NUCLEOTIDE SEQUENCE [LARGE SCALE GENOMIC DNA]</scope>
    <source>
        <strain>P125109</strain>
    </source>
</reference>
<protein>
    <recommendedName>
        <fullName evidence="1">tRNA-2-methylthio-N(6)-dimethylallyladenosine synthase</fullName>
        <ecNumber evidence="1">2.8.4.3</ecNumber>
    </recommendedName>
    <alternativeName>
        <fullName evidence="1">(Dimethylallyl)adenosine tRNA methylthiotransferase MiaB</fullName>
    </alternativeName>
    <alternativeName>
        <fullName evidence="1">tRNA-i(6)A37 methylthiotransferase</fullName>
    </alternativeName>
</protein>
<sequence>MTKKLHIKTWGCQMNEYDSSKMADLLDATHGYQLTDVAEEADVLLLNTCSIREKAQEKVFHQLGRWRLLKEKNPDLIIGVGGCVASQEGEHIRQRAHYVDIIFGPQTLHRLPEMINSVRGDRSPVVDISFPEIEKFDRLPEPRAEGPTAFVSIMEGCNKYCTYCVVPYTRGEEVSRPSDDILFEIAQLAAQGVREVNLLGQNVNAWRGENYDGTTGTFADLLRLVAAIDGIDRIRFTTSHPIEFTDDIIEVYRDTPELVSFLHLPVQSGSDRVLNLMGRTHTALEYKAIIRKLRAARPDIQISSDFIVGFPGETNDDFEKTMKLIADVNFDMSYSFIFSARPGTPAADMVDDVPEEEKKQRLYILQERINQQAMAWSRRMLGTTQRILVEGTSRKNIMELSGRTENNRVVNFEGTPEMIGKFVDVEITDVYPNSLRGKVVRTEDEMGLRVAETPESVIARTRKENELGVGFYQP</sequence>
<keyword id="KW-0004">4Fe-4S</keyword>
<keyword id="KW-0963">Cytoplasm</keyword>
<keyword id="KW-0408">Iron</keyword>
<keyword id="KW-0411">Iron-sulfur</keyword>
<keyword id="KW-0479">Metal-binding</keyword>
<keyword id="KW-0949">S-adenosyl-L-methionine</keyword>
<keyword id="KW-0808">Transferase</keyword>
<keyword id="KW-0819">tRNA processing</keyword>
<comment type="function">
    <text evidence="1">Catalyzes the methylthiolation of N6-(dimethylallyl)adenosine (i(6)A), leading to the formation of 2-methylthio-N6-(dimethylallyl)adenosine (ms(2)i(6)A) at position 37 in tRNAs that read codons beginning with uridine.</text>
</comment>
<comment type="catalytic activity">
    <reaction evidence="1">
        <text>N(6)-dimethylallyladenosine(37) in tRNA + (sulfur carrier)-SH + AH2 + 2 S-adenosyl-L-methionine = 2-methylsulfanyl-N(6)-dimethylallyladenosine(37) in tRNA + (sulfur carrier)-H + 5'-deoxyadenosine + L-methionine + A + S-adenosyl-L-homocysteine + 2 H(+)</text>
        <dbReference type="Rhea" id="RHEA:37067"/>
        <dbReference type="Rhea" id="RHEA-COMP:10375"/>
        <dbReference type="Rhea" id="RHEA-COMP:10376"/>
        <dbReference type="Rhea" id="RHEA-COMP:14737"/>
        <dbReference type="Rhea" id="RHEA-COMP:14739"/>
        <dbReference type="ChEBI" id="CHEBI:13193"/>
        <dbReference type="ChEBI" id="CHEBI:15378"/>
        <dbReference type="ChEBI" id="CHEBI:17319"/>
        <dbReference type="ChEBI" id="CHEBI:17499"/>
        <dbReference type="ChEBI" id="CHEBI:29917"/>
        <dbReference type="ChEBI" id="CHEBI:57844"/>
        <dbReference type="ChEBI" id="CHEBI:57856"/>
        <dbReference type="ChEBI" id="CHEBI:59789"/>
        <dbReference type="ChEBI" id="CHEBI:64428"/>
        <dbReference type="ChEBI" id="CHEBI:74415"/>
        <dbReference type="ChEBI" id="CHEBI:74417"/>
        <dbReference type="EC" id="2.8.4.3"/>
    </reaction>
</comment>
<comment type="cofactor">
    <cofactor evidence="1">
        <name>[4Fe-4S] cluster</name>
        <dbReference type="ChEBI" id="CHEBI:49883"/>
    </cofactor>
    <text evidence="1">Binds 2 [4Fe-4S] clusters. One cluster is coordinated with 3 cysteines and an exchangeable S-adenosyl-L-methionine.</text>
</comment>
<comment type="subunit">
    <text evidence="1">Monomer.</text>
</comment>
<comment type="subcellular location">
    <subcellularLocation>
        <location evidence="1">Cytoplasm</location>
    </subcellularLocation>
</comment>
<comment type="similarity">
    <text evidence="1">Belongs to the methylthiotransferase family. MiaB subfamily.</text>
</comment>
<evidence type="ECO:0000255" key="1">
    <source>
        <dbReference type="HAMAP-Rule" id="MF_01864"/>
    </source>
</evidence>
<evidence type="ECO:0000255" key="2">
    <source>
        <dbReference type="PROSITE-ProRule" id="PRU01266"/>
    </source>
</evidence>
<gene>
    <name evidence="1" type="primary">miaB</name>
    <name type="ordered locus">SEN0639</name>
</gene>
<name>MIAB_SALEP</name>
<accession>B5QWC1</accession>
<feature type="chain" id="PRO_0000374523" description="tRNA-2-methylthio-N(6)-dimethylallyladenosine synthase">
    <location>
        <begin position="1"/>
        <end position="474"/>
    </location>
</feature>
<feature type="domain" description="MTTase N-terminal" evidence="1">
    <location>
        <begin position="3"/>
        <end position="120"/>
    </location>
</feature>
<feature type="domain" description="Radical SAM core" evidence="2">
    <location>
        <begin position="143"/>
        <end position="375"/>
    </location>
</feature>
<feature type="domain" description="TRAM" evidence="1">
    <location>
        <begin position="378"/>
        <end position="441"/>
    </location>
</feature>
<feature type="binding site" evidence="1">
    <location>
        <position position="12"/>
    </location>
    <ligand>
        <name>[4Fe-4S] cluster</name>
        <dbReference type="ChEBI" id="CHEBI:49883"/>
        <label>1</label>
    </ligand>
</feature>
<feature type="binding site" evidence="1">
    <location>
        <position position="49"/>
    </location>
    <ligand>
        <name>[4Fe-4S] cluster</name>
        <dbReference type="ChEBI" id="CHEBI:49883"/>
        <label>1</label>
    </ligand>
</feature>
<feature type="binding site" evidence="1">
    <location>
        <position position="83"/>
    </location>
    <ligand>
        <name>[4Fe-4S] cluster</name>
        <dbReference type="ChEBI" id="CHEBI:49883"/>
        <label>1</label>
    </ligand>
</feature>
<feature type="binding site" evidence="1">
    <location>
        <position position="157"/>
    </location>
    <ligand>
        <name>[4Fe-4S] cluster</name>
        <dbReference type="ChEBI" id="CHEBI:49883"/>
        <label>2</label>
        <note>4Fe-4S-S-AdoMet</note>
    </ligand>
</feature>
<feature type="binding site" evidence="1">
    <location>
        <position position="161"/>
    </location>
    <ligand>
        <name>[4Fe-4S] cluster</name>
        <dbReference type="ChEBI" id="CHEBI:49883"/>
        <label>2</label>
        <note>4Fe-4S-S-AdoMet</note>
    </ligand>
</feature>
<feature type="binding site" evidence="1">
    <location>
        <position position="164"/>
    </location>
    <ligand>
        <name>[4Fe-4S] cluster</name>
        <dbReference type="ChEBI" id="CHEBI:49883"/>
        <label>2</label>
        <note>4Fe-4S-S-AdoMet</note>
    </ligand>
</feature>
<proteinExistence type="inferred from homology"/>